<sequence length="351" mass="40515">MNQDRKWNIVGGRVIKTGIAVFLTVLVCDFFNIPTIFAVITAIVTIEPTATDSIKKGLIRFPASTIGSAYAMTFTFFLGHQAISYALAAMFTIVACQKLRLHAGTLVATLTAVAMIPITANHYFTAFLIRLATTSTGIIVSTLVNFFIFPPHYTKMIFGCTEDLFAKTANIMEEWITALVAGKGVKKETAQDLSKLTLLLHKAIQFVQYEQKDWKYHQHTKKEMRSFLTMQKQLHILQQIIYHIDNLARVSIETCDWSQSEREILQRTIHSIIAILRNRCNEIDEEHFKLIAELDKQFWSYKNDLKDYKPNHYHHHFSSESIILFEVLSIHDMLEELKQISEKYEWENRFN</sequence>
<keyword id="KW-1003">Cell membrane</keyword>
<keyword id="KW-0472">Membrane</keyword>
<keyword id="KW-1185">Reference proteome</keyword>
<keyword id="KW-0812">Transmembrane</keyword>
<keyword id="KW-1133">Transmembrane helix</keyword>
<evidence type="ECO:0000255" key="1"/>
<evidence type="ECO:0000305" key="2"/>
<protein>
    <recommendedName>
        <fullName>UPF0421 protein BC_2748</fullName>
    </recommendedName>
</protein>
<name>Y2748_BACCR</name>
<accession>Q81CK9</accession>
<proteinExistence type="inferred from homology"/>
<dbReference type="EMBL" id="AE016877">
    <property type="protein sequence ID" value="AAP09701.1"/>
    <property type="status" value="ALT_INIT"/>
    <property type="molecule type" value="Genomic_DNA"/>
</dbReference>
<dbReference type="RefSeq" id="NP_832500.1">
    <property type="nucleotide sequence ID" value="NC_004722.1"/>
</dbReference>
<dbReference type="RefSeq" id="WP_001070827.1">
    <property type="nucleotide sequence ID" value="NC_004722.1"/>
</dbReference>
<dbReference type="SMR" id="Q81CK9"/>
<dbReference type="STRING" id="226900.BC_2748"/>
<dbReference type="KEGG" id="bce:BC2748"/>
<dbReference type="PATRIC" id="fig|226900.8.peg.2803"/>
<dbReference type="HOGENOM" id="CLU_067028_0_0_9"/>
<dbReference type="Proteomes" id="UP000001417">
    <property type="component" value="Chromosome"/>
</dbReference>
<dbReference type="GO" id="GO:0005886">
    <property type="term" value="C:plasma membrane"/>
    <property type="evidence" value="ECO:0000318"/>
    <property type="project" value="GO_Central"/>
</dbReference>
<dbReference type="InterPro" id="IPR010343">
    <property type="entry name" value="ArAE_1"/>
</dbReference>
<dbReference type="PANTHER" id="PTHR30509:SF9">
    <property type="entry name" value="MULTIDRUG RESISTANCE PROTEIN MDTO"/>
    <property type="match status" value="1"/>
</dbReference>
<dbReference type="PANTHER" id="PTHR30509">
    <property type="entry name" value="P-HYDROXYBENZOIC ACID EFFLUX PUMP SUBUNIT-RELATED"/>
    <property type="match status" value="1"/>
</dbReference>
<dbReference type="Pfam" id="PF06081">
    <property type="entry name" value="ArAE_1"/>
    <property type="match status" value="1"/>
</dbReference>
<reference key="1">
    <citation type="journal article" date="2003" name="Nature">
        <title>Genome sequence of Bacillus cereus and comparative analysis with Bacillus anthracis.</title>
        <authorList>
            <person name="Ivanova N."/>
            <person name="Sorokin A."/>
            <person name="Anderson I."/>
            <person name="Galleron N."/>
            <person name="Candelon B."/>
            <person name="Kapatral V."/>
            <person name="Bhattacharyya A."/>
            <person name="Reznik G."/>
            <person name="Mikhailova N."/>
            <person name="Lapidus A."/>
            <person name="Chu L."/>
            <person name="Mazur M."/>
            <person name="Goltsman E."/>
            <person name="Larsen N."/>
            <person name="D'Souza M."/>
            <person name="Walunas T."/>
            <person name="Grechkin Y."/>
            <person name="Pusch G."/>
            <person name="Haselkorn R."/>
            <person name="Fonstein M."/>
            <person name="Ehrlich S.D."/>
            <person name="Overbeek R."/>
            <person name="Kyrpides N.C."/>
        </authorList>
    </citation>
    <scope>NUCLEOTIDE SEQUENCE [LARGE SCALE GENOMIC DNA]</scope>
    <source>
        <strain>ATCC 14579 / DSM 31 / CCUG 7414 / JCM 2152 / NBRC 15305 / NCIMB 9373 / NCTC 2599 / NRRL B-3711</strain>
    </source>
</reference>
<comment type="subcellular location">
    <subcellularLocation>
        <location evidence="2">Cell membrane</location>
        <topology evidence="2">Multi-pass membrane protein</topology>
    </subcellularLocation>
</comment>
<comment type="similarity">
    <text evidence="2">Belongs to the UPF0421 family.</text>
</comment>
<comment type="sequence caution" evidence="2">
    <conflict type="erroneous initiation">
        <sequence resource="EMBL-CDS" id="AAP09701"/>
    </conflict>
</comment>
<organism>
    <name type="scientific">Bacillus cereus (strain ATCC 14579 / DSM 31 / CCUG 7414 / JCM 2152 / NBRC 15305 / NCIMB 9373 / NCTC 2599 / NRRL B-3711)</name>
    <dbReference type="NCBI Taxonomy" id="226900"/>
    <lineage>
        <taxon>Bacteria</taxon>
        <taxon>Bacillati</taxon>
        <taxon>Bacillota</taxon>
        <taxon>Bacilli</taxon>
        <taxon>Bacillales</taxon>
        <taxon>Bacillaceae</taxon>
        <taxon>Bacillus</taxon>
        <taxon>Bacillus cereus group</taxon>
    </lineage>
</organism>
<feature type="chain" id="PRO_0000283008" description="UPF0421 protein BC_2748">
    <location>
        <begin position="1"/>
        <end position="351"/>
    </location>
</feature>
<feature type="transmembrane region" description="Helical" evidence="1">
    <location>
        <begin position="19"/>
        <end position="39"/>
    </location>
</feature>
<feature type="transmembrane region" description="Helical" evidence="1">
    <location>
        <begin position="74"/>
        <end position="94"/>
    </location>
</feature>
<feature type="transmembrane region" description="Helical" evidence="1">
    <location>
        <begin position="109"/>
        <end position="129"/>
    </location>
</feature>
<feature type="transmembrane region" description="Helical" evidence="1">
    <location>
        <begin position="131"/>
        <end position="151"/>
    </location>
</feature>
<gene>
    <name type="ordered locus">BC_2748</name>
</gene>